<comment type="function">
    <text evidence="1">Catalyzes the GTP-dependent ribosomal translocation step during translation elongation. During this step, the ribosome changes from the pre-translocational (PRE) to the post-translocational (POST) state as the newly formed A-site-bound peptidyl-tRNA and P-site-bound deacylated tRNA move to the P and E sites, respectively. Catalyzes the coordinated movement of the two tRNA molecules, the mRNA and conformational changes in the ribosome.</text>
</comment>
<comment type="subcellular location">
    <subcellularLocation>
        <location evidence="1">Cytoplasm</location>
    </subcellularLocation>
</comment>
<comment type="similarity">
    <text evidence="1">Belongs to the TRAFAC class translation factor GTPase superfamily. Classic translation factor GTPase family. EF-G/EF-2 subfamily.</text>
</comment>
<name>EFG_PECAS</name>
<organism>
    <name type="scientific">Pectobacterium atrosepticum (strain SCRI 1043 / ATCC BAA-672)</name>
    <name type="common">Erwinia carotovora subsp. atroseptica</name>
    <dbReference type="NCBI Taxonomy" id="218491"/>
    <lineage>
        <taxon>Bacteria</taxon>
        <taxon>Pseudomonadati</taxon>
        <taxon>Pseudomonadota</taxon>
        <taxon>Gammaproteobacteria</taxon>
        <taxon>Enterobacterales</taxon>
        <taxon>Pectobacteriaceae</taxon>
        <taxon>Pectobacterium</taxon>
    </lineage>
</organism>
<feature type="chain" id="PRO_0000091123" description="Elongation factor G">
    <location>
        <begin position="1"/>
        <end position="704"/>
    </location>
</feature>
<feature type="domain" description="tr-type G">
    <location>
        <begin position="8"/>
        <end position="290"/>
    </location>
</feature>
<feature type="binding site" evidence="1">
    <location>
        <begin position="17"/>
        <end position="24"/>
    </location>
    <ligand>
        <name>GTP</name>
        <dbReference type="ChEBI" id="CHEBI:37565"/>
    </ligand>
</feature>
<feature type="binding site" evidence="1">
    <location>
        <begin position="88"/>
        <end position="92"/>
    </location>
    <ligand>
        <name>GTP</name>
        <dbReference type="ChEBI" id="CHEBI:37565"/>
    </ligand>
</feature>
<feature type="binding site" evidence="1">
    <location>
        <begin position="142"/>
        <end position="145"/>
    </location>
    <ligand>
        <name>GTP</name>
        <dbReference type="ChEBI" id="CHEBI:37565"/>
    </ligand>
</feature>
<sequence>MARTTPIARYRNIGISAHIDAGKTTTTERILFYTGVNHKIGEVHDGAATMDWMEQEQERGITITSAATTAFWSGMAKQYEPHRVNIIDTPGHVDFTIEVERSMRVLDGAVMVYCAVGGVQPQSETVWRQANKYKVPRIAFVNKMDRMGANFLKVVGQIKARLGANPVPLQLAIGAEEGFTGVVDLVKMKAINWNDADQGVTFTYEDIPAEMQELADEWHQNLIESAAEASEELMEKYLGGEELTEEEIKKALRQRVLNNEVILVTCGSAFKNKGVQAMLDAVIDYLPAPTDVPAINGLLDDGKDTPAERHANDDEPFSALAFKIATDPFVGNLTFFRVYSGVVNSGDTVLNPVKSARERFGRIVQMHANKREEIKEVRAGDIAAAIGLKDVTTGDTLCDPNNVIILERMEFPEPVISIAVEPKTKADQEKMGLALGRLAKEDPSFRVWTDEESNQTIIAGMGELHLDIIVDRMKREFNVEANVGKPQVAYREAIRSKVTDIEGKHAKQSGGRGQYGHVVIDMYPLEPGSNPKGYEFVNDIKGGVIPGEYIPAVDKGIQEQLKAGPLAGYPVVDLGVRLHFGSYHDVDSSELAFKLAASIAFKDGFKKAKPVLLEPIMKVEVETPEENTGDVIGDLSRRRGMLRGQESNVTGVVIHAEVPLSEMFGYATQLRSLTKGRASYSMEFLKYDDAPNNVAQAVIEARGK</sequence>
<evidence type="ECO:0000255" key="1">
    <source>
        <dbReference type="HAMAP-Rule" id="MF_00054"/>
    </source>
</evidence>
<proteinExistence type="inferred from homology"/>
<reference key="1">
    <citation type="journal article" date="2004" name="Proc. Natl. Acad. Sci. U.S.A.">
        <title>Genome sequence of the enterobacterial phytopathogen Erwinia carotovora subsp. atroseptica and characterization of virulence factors.</title>
        <authorList>
            <person name="Bell K.S."/>
            <person name="Sebaihia M."/>
            <person name="Pritchard L."/>
            <person name="Holden M.T.G."/>
            <person name="Hyman L.J."/>
            <person name="Holeva M.C."/>
            <person name="Thomson N.R."/>
            <person name="Bentley S.D."/>
            <person name="Churcher L.J.C."/>
            <person name="Mungall K."/>
            <person name="Atkin R."/>
            <person name="Bason N."/>
            <person name="Brooks K."/>
            <person name="Chillingworth T."/>
            <person name="Clark K."/>
            <person name="Doggett J."/>
            <person name="Fraser A."/>
            <person name="Hance Z."/>
            <person name="Hauser H."/>
            <person name="Jagels K."/>
            <person name="Moule S."/>
            <person name="Norbertczak H."/>
            <person name="Ormond D."/>
            <person name="Price C."/>
            <person name="Quail M.A."/>
            <person name="Sanders M."/>
            <person name="Walker D."/>
            <person name="Whitehead S."/>
            <person name="Salmond G.P.C."/>
            <person name="Birch P.R.J."/>
            <person name="Parkhill J."/>
            <person name="Toth I.K."/>
        </authorList>
    </citation>
    <scope>NUCLEOTIDE SEQUENCE [LARGE SCALE GENOMIC DNA]</scope>
    <source>
        <strain>SCRI 1043 / ATCC BAA-672</strain>
    </source>
</reference>
<accession>Q6CZW5</accession>
<gene>
    <name evidence="1" type="primary">fusA</name>
    <name type="ordered locus">ECA4036</name>
</gene>
<dbReference type="EMBL" id="BX950851">
    <property type="protein sequence ID" value="CAG76933.1"/>
    <property type="molecule type" value="Genomic_DNA"/>
</dbReference>
<dbReference type="RefSeq" id="WP_011095514.1">
    <property type="nucleotide sequence ID" value="NC_004547.2"/>
</dbReference>
<dbReference type="SMR" id="Q6CZW5"/>
<dbReference type="STRING" id="218491.ECA4036"/>
<dbReference type="GeneID" id="57210700"/>
<dbReference type="KEGG" id="eca:ECA4036"/>
<dbReference type="PATRIC" id="fig|218491.5.peg.4102"/>
<dbReference type="eggNOG" id="COG0480">
    <property type="taxonomic scope" value="Bacteria"/>
</dbReference>
<dbReference type="HOGENOM" id="CLU_002794_4_1_6"/>
<dbReference type="OrthoDB" id="9804431at2"/>
<dbReference type="Proteomes" id="UP000007966">
    <property type="component" value="Chromosome"/>
</dbReference>
<dbReference type="GO" id="GO:0005737">
    <property type="term" value="C:cytoplasm"/>
    <property type="evidence" value="ECO:0007669"/>
    <property type="project" value="UniProtKB-SubCell"/>
</dbReference>
<dbReference type="GO" id="GO:0005525">
    <property type="term" value="F:GTP binding"/>
    <property type="evidence" value="ECO:0007669"/>
    <property type="project" value="UniProtKB-UniRule"/>
</dbReference>
<dbReference type="GO" id="GO:0003924">
    <property type="term" value="F:GTPase activity"/>
    <property type="evidence" value="ECO:0007669"/>
    <property type="project" value="InterPro"/>
</dbReference>
<dbReference type="GO" id="GO:0097216">
    <property type="term" value="F:guanosine tetraphosphate binding"/>
    <property type="evidence" value="ECO:0007669"/>
    <property type="project" value="UniProtKB-ARBA"/>
</dbReference>
<dbReference type="GO" id="GO:0003746">
    <property type="term" value="F:translation elongation factor activity"/>
    <property type="evidence" value="ECO:0007669"/>
    <property type="project" value="UniProtKB-UniRule"/>
</dbReference>
<dbReference type="GO" id="GO:0032790">
    <property type="term" value="P:ribosome disassembly"/>
    <property type="evidence" value="ECO:0007669"/>
    <property type="project" value="TreeGrafter"/>
</dbReference>
<dbReference type="CDD" id="cd01886">
    <property type="entry name" value="EF-G"/>
    <property type="match status" value="1"/>
</dbReference>
<dbReference type="CDD" id="cd16262">
    <property type="entry name" value="EFG_III"/>
    <property type="match status" value="1"/>
</dbReference>
<dbReference type="CDD" id="cd01434">
    <property type="entry name" value="EFG_mtEFG1_IV"/>
    <property type="match status" value="1"/>
</dbReference>
<dbReference type="CDD" id="cd03713">
    <property type="entry name" value="EFG_mtEFG_C"/>
    <property type="match status" value="1"/>
</dbReference>
<dbReference type="CDD" id="cd04088">
    <property type="entry name" value="EFG_mtEFG_II"/>
    <property type="match status" value="1"/>
</dbReference>
<dbReference type="FunFam" id="2.40.30.10:FF:000006">
    <property type="entry name" value="Elongation factor G"/>
    <property type="match status" value="1"/>
</dbReference>
<dbReference type="FunFam" id="3.30.230.10:FF:000003">
    <property type="entry name" value="Elongation factor G"/>
    <property type="match status" value="1"/>
</dbReference>
<dbReference type="FunFam" id="3.30.70.240:FF:000001">
    <property type="entry name" value="Elongation factor G"/>
    <property type="match status" value="1"/>
</dbReference>
<dbReference type="FunFam" id="3.30.70.870:FF:000001">
    <property type="entry name" value="Elongation factor G"/>
    <property type="match status" value="1"/>
</dbReference>
<dbReference type="FunFam" id="3.40.50.300:FF:000029">
    <property type="entry name" value="Elongation factor G"/>
    <property type="match status" value="1"/>
</dbReference>
<dbReference type="Gene3D" id="3.30.230.10">
    <property type="match status" value="1"/>
</dbReference>
<dbReference type="Gene3D" id="3.30.70.240">
    <property type="match status" value="1"/>
</dbReference>
<dbReference type="Gene3D" id="3.30.70.870">
    <property type="entry name" value="Elongation Factor G (Translational Gtpase), domain 3"/>
    <property type="match status" value="1"/>
</dbReference>
<dbReference type="Gene3D" id="3.40.50.300">
    <property type="entry name" value="P-loop containing nucleotide triphosphate hydrolases"/>
    <property type="match status" value="1"/>
</dbReference>
<dbReference type="Gene3D" id="2.40.30.10">
    <property type="entry name" value="Translation factors"/>
    <property type="match status" value="1"/>
</dbReference>
<dbReference type="HAMAP" id="MF_00054_B">
    <property type="entry name" value="EF_G_EF_2_B"/>
    <property type="match status" value="1"/>
</dbReference>
<dbReference type="InterPro" id="IPR041095">
    <property type="entry name" value="EFG_II"/>
</dbReference>
<dbReference type="InterPro" id="IPR009022">
    <property type="entry name" value="EFG_III"/>
</dbReference>
<dbReference type="InterPro" id="IPR035647">
    <property type="entry name" value="EFG_III/V"/>
</dbReference>
<dbReference type="InterPro" id="IPR047872">
    <property type="entry name" value="EFG_IV"/>
</dbReference>
<dbReference type="InterPro" id="IPR035649">
    <property type="entry name" value="EFG_V"/>
</dbReference>
<dbReference type="InterPro" id="IPR000640">
    <property type="entry name" value="EFG_V-like"/>
</dbReference>
<dbReference type="InterPro" id="IPR004161">
    <property type="entry name" value="EFTu-like_2"/>
</dbReference>
<dbReference type="InterPro" id="IPR031157">
    <property type="entry name" value="G_TR_CS"/>
</dbReference>
<dbReference type="InterPro" id="IPR027417">
    <property type="entry name" value="P-loop_NTPase"/>
</dbReference>
<dbReference type="InterPro" id="IPR020568">
    <property type="entry name" value="Ribosomal_Su5_D2-typ_SF"/>
</dbReference>
<dbReference type="InterPro" id="IPR014721">
    <property type="entry name" value="Ribsml_uS5_D2-typ_fold_subgr"/>
</dbReference>
<dbReference type="InterPro" id="IPR005225">
    <property type="entry name" value="Small_GTP-bd"/>
</dbReference>
<dbReference type="InterPro" id="IPR000795">
    <property type="entry name" value="T_Tr_GTP-bd_dom"/>
</dbReference>
<dbReference type="InterPro" id="IPR009000">
    <property type="entry name" value="Transl_B-barrel_sf"/>
</dbReference>
<dbReference type="InterPro" id="IPR004540">
    <property type="entry name" value="Transl_elong_EFG/EF2"/>
</dbReference>
<dbReference type="InterPro" id="IPR005517">
    <property type="entry name" value="Transl_elong_EFG/EF2_IV"/>
</dbReference>
<dbReference type="NCBIfam" id="TIGR00484">
    <property type="entry name" value="EF-G"/>
    <property type="match status" value="1"/>
</dbReference>
<dbReference type="NCBIfam" id="NF009381">
    <property type="entry name" value="PRK12740.1-5"/>
    <property type="match status" value="1"/>
</dbReference>
<dbReference type="NCBIfam" id="TIGR00231">
    <property type="entry name" value="small_GTP"/>
    <property type="match status" value="1"/>
</dbReference>
<dbReference type="PANTHER" id="PTHR43261:SF1">
    <property type="entry name" value="RIBOSOME-RELEASING FACTOR 2, MITOCHONDRIAL"/>
    <property type="match status" value="1"/>
</dbReference>
<dbReference type="PANTHER" id="PTHR43261">
    <property type="entry name" value="TRANSLATION ELONGATION FACTOR G-RELATED"/>
    <property type="match status" value="1"/>
</dbReference>
<dbReference type="Pfam" id="PF00679">
    <property type="entry name" value="EFG_C"/>
    <property type="match status" value="1"/>
</dbReference>
<dbReference type="Pfam" id="PF14492">
    <property type="entry name" value="EFG_III"/>
    <property type="match status" value="1"/>
</dbReference>
<dbReference type="Pfam" id="PF03764">
    <property type="entry name" value="EFG_IV"/>
    <property type="match status" value="1"/>
</dbReference>
<dbReference type="Pfam" id="PF00009">
    <property type="entry name" value="GTP_EFTU"/>
    <property type="match status" value="1"/>
</dbReference>
<dbReference type="Pfam" id="PF03144">
    <property type="entry name" value="GTP_EFTU_D2"/>
    <property type="match status" value="1"/>
</dbReference>
<dbReference type="PRINTS" id="PR00315">
    <property type="entry name" value="ELONGATNFCT"/>
</dbReference>
<dbReference type="SMART" id="SM00838">
    <property type="entry name" value="EFG_C"/>
    <property type="match status" value="1"/>
</dbReference>
<dbReference type="SMART" id="SM00889">
    <property type="entry name" value="EFG_IV"/>
    <property type="match status" value="1"/>
</dbReference>
<dbReference type="SUPFAM" id="SSF54980">
    <property type="entry name" value="EF-G C-terminal domain-like"/>
    <property type="match status" value="2"/>
</dbReference>
<dbReference type="SUPFAM" id="SSF52540">
    <property type="entry name" value="P-loop containing nucleoside triphosphate hydrolases"/>
    <property type="match status" value="1"/>
</dbReference>
<dbReference type="SUPFAM" id="SSF54211">
    <property type="entry name" value="Ribosomal protein S5 domain 2-like"/>
    <property type="match status" value="1"/>
</dbReference>
<dbReference type="SUPFAM" id="SSF50447">
    <property type="entry name" value="Translation proteins"/>
    <property type="match status" value="1"/>
</dbReference>
<dbReference type="PROSITE" id="PS00301">
    <property type="entry name" value="G_TR_1"/>
    <property type="match status" value="1"/>
</dbReference>
<dbReference type="PROSITE" id="PS51722">
    <property type="entry name" value="G_TR_2"/>
    <property type="match status" value="1"/>
</dbReference>
<protein>
    <recommendedName>
        <fullName evidence="1">Elongation factor G</fullName>
        <shortName evidence="1">EF-G</shortName>
    </recommendedName>
</protein>
<keyword id="KW-0963">Cytoplasm</keyword>
<keyword id="KW-0251">Elongation factor</keyword>
<keyword id="KW-0342">GTP-binding</keyword>
<keyword id="KW-0547">Nucleotide-binding</keyword>
<keyword id="KW-0648">Protein biosynthesis</keyword>
<keyword id="KW-1185">Reference proteome</keyword>